<keyword id="KW-0963">Cytoplasm</keyword>
<keyword id="KW-0488">Methylation</keyword>
<keyword id="KW-0648">Protein biosynthesis</keyword>
<dbReference type="EMBL" id="CP000733">
    <property type="protein sequence ID" value="ABS76927.1"/>
    <property type="molecule type" value="Genomic_DNA"/>
</dbReference>
<dbReference type="RefSeq" id="WP_005772919.1">
    <property type="nucleotide sequence ID" value="NC_009727.1"/>
</dbReference>
<dbReference type="SMR" id="A9KGY3"/>
<dbReference type="KEGG" id="cbd:CBUD_2064"/>
<dbReference type="HOGENOM" id="CLU_036856_0_1_6"/>
<dbReference type="Proteomes" id="UP000008555">
    <property type="component" value="Chromosome"/>
</dbReference>
<dbReference type="GO" id="GO:0005737">
    <property type="term" value="C:cytoplasm"/>
    <property type="evidence" value="ECO:0007669"/>
    <property type="project" value="UniProtKB-SubCell"/>
</dbReference>
<dbReference type="GO" id="GO:0016149">
    <property type="term" value="F:translation release factor activity, codon specific"/>
    <property type="evidence" value="ECO:0007669"/>
    <property type="project" value="UniProtKB-UniRule"/>
</dbReference>
<dbReference type="FunFam" id="3.30.160.20:FF:000004">
    <property type="entry name" value="Peptide chain release factor 1"/>
    <property type="match status" value="1"/>
</dbReference>
<dbReference type="FunFam" id="3.30.70.1660:FF:000002">
    <property type="entry name" value="Peptide chain release factor 1"/>
    <property type="match status" value="1"/>
</dbReference>
<dbReference type="FunFam" id="3.30.70.1660:FF:000004">
    <property type="entry name" value="Peptide chain release factor 1"/>
    <property type="match status" value="1"/>
</dbReference>
<dbReference type="Gene3D" id="3.30.160.20">
    <property type="match status" value="1"/>
</dbReference>
<dbReference type="Gene3D" id="3.30.70.1660">
    <property type="match status" value="1"/>
</dbReference>
<dbReference type="Gene3D" id="6.10.140.1950">
    <property type="match status" value="1"/>
</dbReference>
<dbReference type="HAMAP" id="MF_00093">
    <property type="entry name" value="Rel_fac_1"/>
    <property type="match status" value="1"/>
</dbReference>
<dbReference type="InterPro" id="IPR005139">
    <property type="entry name" value="PCRF"/>
</dbReference>
<dbReference type="InterPro" id="IPR000352">
    <property type="entry name" value="Pep_chain_release_fac_I"/>
</dbReference>
<dbReference type="InterPro" id="IPR045853">
    <property type="entry name" value="Pep_chain_release_fac_I_sf"/>
</dbReference>
<dbReference type="InterPro" id="IPR050057">
    <property type="entry name" value="Prokaryotic/Mito_RF"/>
</dbReference>
<dbReference type="InterPro" id="IPR004373">
    <property type="entry name" value="RF-1"/>
</dbReference>
<dbReference type="NCBIfam" id="TIGR00019">
    <property type="entry name" value="prfA"/>
    <property type="match status" value="1"/>
</dbReference>
<dbReference type="NCBIfam" id="NF001859">
    <property type="entry name" value="PRK00591.1"/>
    <property type="match status" value="1"/>
</dbReference>
<dbReference type="PANTHER" id="PTHR43804">
    <property type="entry name" value="LD18447P"/>
    <property type="match status" value="1"/>
</dbReference>
<dbReference type="PANTHER" id="PTHR43804:SF7">
    <property type="entry name" value="LD18447P"/>
    <property type="match status" value="1"/>
</dbReference>
<dbReference type="Pfam" id="PF03462">
    <property type="entry name" value="PCRF"/>
    <property type="match status" value="1"/>
</dbReference>
<dbReference type="Pfam" id="PF00472">
    <property type="entry name" value="RF-1"/>
    <property type="match status" value="1"/>
</dbReference>
<dbReference type="SMART" id="SM00937">
    <property type="entry name" value="PCRF"/>
    <property type="match status" value="1"/>
</dbReference>
<dbReference type="SUPFAM" id="SSF75620">
    <property type="entry name" value="Release factor"/>
    <property type="match status" value="1"/>
</dbReference>
<dbReference type="PROSITE" id="PS00745">
    <property type="entry name" value="RF_PROK_I"/>
    <property type="match status" value="1"/>
</dbReference>
<comment type="function">
    <text evidence="1">Peptide chain release factor 1 directs the termination of translation in response to the peptide chain termination codons UAG and UAA.</text>
</comment>
<comment type="subcellular location">
    <subcellularLocation>
        <location evidence="1">Cytoplasm</location>
    </subcellularLocation>
</comment>
<comment type="PTM">
    <text evidence="1">Methylated by PrmC. Methylation increases the termination efficiency of RF1.</text>
</comment>
<comment type="similarity">
    <text evidence="1">Belongs to the prokaryotic/mitochondrial release factor family.</text>
</comment>
<evidence type="ECO:0000255" key="1">
    <source>
        <dbReference type="HAMAP-Rule" id="MF_00093"/>
    </source>
</evidence>
<evidence type="ECO:0000256" key="2">
    <source>
        <dbReference type="SAM" id="MobiDB-lite"/>
    </source>
</evidence>
<sequence length="361" mass="40763">MKPSLIEKLKTLTYRYSEIGGLLSDSTVINDQDRYRELGKEYAQLEPIVKCFQQFQQNEKAIESAEEMQQEKDPELRKLAEEELEQLTLKKEELEDQLKLLLVPKDPNDERNVFLEIRAGTGGNEAAIFAGDLFRMYARYAETKGWRVNIVSAHEGEHGGFKEVIARVIGEGVYSQLKFESGAHRVQRVPVTESQGRIHTSACTVAIMPEVDEIDQIKINPAELRIDTFRASGAGGQHVNRTDSAIRITHLPTGVVVECQDERSQHKNKARAMSLLQSKLLAAERAKQDQEQAAKRKSLVGSGDRSERIRTYNFPQGRVTDHRINLTLYQLDEVIEGDLDPVIGPLIRELQAEQLAELSGE</sequence>
<reference key="1">
    <citation type="journal article" date="2009" name="Infect. Immun.">
        <title>Comparative genomics reveal extensive transposon-mediated genomic plasticity and diversity among potential effector proteins within the genus Coxiella.</title>
        <authorList>
            <person name="Beare P.A."/>
            <person name="Unsworth N."/>
            <person name="Andoh M."/>
            <person name="Voth D.E."/>
            <person name="Omsland A."/>
            <person name="Gilk S.D."/>
            <person name="Williams K.P."/>
            <person name="Sobral B.W."/>
            <person name="Kupko J.J. III"/>
            <person name="Porcella S.F."/>
            <person name="Samuel J.E."/>
            <person name="Heinzen R.A."/>
        </authorList>
    </citation>
    <scope>NUCLEOTIDE SEQUENCE [LARGE SCALE GENOMIC DNA]</scope>
    <source>
        <strain>Dugway 5J108-111</strain>
    </source>
</reference>
<feature type="chain" id="PRO_1000075491" description="Peptide chain release factor 1">
    <location>
        <begin position="1"/>
        <end position="361"/>
    </location>
</feature>
<feature type="region of interest" description="Disordered" evidence="2">
    <location>
        <begin position="286"/>
        <end position="306"/>
    </location>
</feature>
<feature type="modified residue" description="N5-methylglutamine" evidence="1">
    <location>
        <position position="237"/>
    </location>
</feature>
<accession>A9KGY3</accession>
<name>RF1_COXBN</name>
<organism>
    <name type="scientific">Coxiella burnetii (strain Dugway 5J108-111)</name>
    <dbReference type="NCBI Taxonomy" id="434922"/>
    <lineage>
        <taxon>Bacteria</taxon>
        <taxon>Pseudomonadati</taxon>
        <taxon>Pseudomonadota</taxon>
        <taxon>Gammaproteobacteria</taxon>
        <taxon>Legionellales</taxon>
        <taxon>Coxiellaceae</taxon>
        <taxon>Coxiella</taxon>
    </lineage>
</organism>
<proteinExistence type="inferred from homology"/>
<gene>
    <name evidence="1" type="primary">prfA</name>
    <name type="ordered locus">CBUD_2064</name>
</gene>
<protein>
    <recommendedName>
        <fullName evidence="1">Peptide chain release factor 1</fullName>
        <shortName evidence="1">RF-1</shortName>
    </recommendedName>
</protein>